<sequence length="247" mass="28426">MHTQVLFEHPLNEKMRTWLRIEFLIQQLSINLPIADHAGALHFFRNISDLLDVFERGEVRTELLKELERQQRKLQAWVEVPGVDQDRIEALRQQLKSAGSVLISAPRIGQQLREDRLIALVRQRLSIPGGCCSFDLPTLHIWLHLQQAQRDAQIESWLASLNPLTQALTLVLDLIRNSAPFRKQTSLNGFYQDNGDDADLLRLMLTLDSQLYPQISGHKSRFAIRFMPLDSENGLVPERLDFELACC</sequence>
<comment type="function">
    <text evidence="1">Cell division factor that enhances FtsZ-ring assembly. Directly interacts with FtsZ and promotes bundling of FtsZ protofilaments, with a reduction in FtsZ GTPase activity.</text>
</comment>
<comment type="subunit">
    <text evidence="1">Interacts with FtsZ.</text>
</comment>
<comment type="subcellular location">
    <subcellularLocation>
        <location evidence="1">Cytoplasm</location>
    </subcellularLocation>
    <text evidence="1">Localizes to mid-cell in an FtsZ-dependent manner.</text>
</comment>
<comment type="similarity">
    <text evidence="1">Belongs to the ZapD family.</text>
</comment>
<organism>
    <name type="scientific">Salmonella typhi</name>
    <dbReference type="NCBI Taxonomy" id="90370"/>
    <lineage>
        <taxon>Bacteria</taxon>
        <taxon>Pseudomonadati</taxon>
        <taxon>Pseudomonadota</taxon>
        <taxon>Gammaproteobacteria</taxon>
        <taxon>Enterobacterales</taxon>
        <taxon>Enterobacteriaceae</taxon>
        <taxon>Salmonella</taxon>
    </lineage>
</organism>
<accession>P67694</accession>
<accession>Q8XEX8</accession>
<evidence type="ECO:0000255" key="1">
    <source>
        <dbReference type="HAMAP-Rule" id="MF_01092"/>
    </source>
</evidence>
<keyword id="KW-0131">Cell cycle</keyword>
<keyword id="KW-0132">Cell division</keyword>
<keyword id="KW-0963">Cytoplasm</keyword>
<keyword id="KW-0717">Septation</keyword>
<reference key="1">
    <citation type="journal article" date="2001" name="Nature">
        <title>Complete genome sequence of a multiple drug resistant Salmonella enterica serovar Typhi CT18.</title>
        <authorList>
            <person name="Parkhill J."/>
            <person name="Dougan G."/>
            <person name="James K.D."/>
            <person name="Thomson N.R."/>
            <person name="Pickard D."/>
            <person name="Wain J."/>
            <person name="Churcher C.M."/>
            <person name="Mungall K.L."/>
            <person name="Bentley S.D."/>
            <person name="Holden M.T.G."/>
            <person name="Sebaihia M."/>
            <person name="Baker S."/>
            <person name="Basham D."/>
            <person name="Brooks K."/>
            <person name="Chillingworth T."/>
            <person name="Connerton P."/>
            <person name="Cronin A."/>
            <person name="Davis P."/>
            <person name="Davies R.M."/>
            <person name="Dowd L."/>
            <person name="White N."/>
            <person name="Farrar J."/>
            <person name="Feltwell T."/>
            <person name="Hamlin N."/>
            <person name="Haque A."/>
            <person name="Hien T.T."/>
            <person name="Holroyd S."/>
            <person name="Jagels K."/>
            <person name="Krogh A."/>
            <person name="Larsen T.S."/>
            <person name="Leather S."/>
            <person name="Moule S."/>
            <person name="O'Gaora P."/>
            <person name="Parry C."/>
            <person name="Quail M.A."/>
            <person name="Rutherford K.M."/>
            <person name="Simmonds M."/>
            <person name="Skelton J."/>
            <person name="Stevens K."/>
            <person name="Whitehead S."/>
            <person name="Barrell B.G."/>
        </authorList>
    </citation>
    <scope>NUCLEOTIDE SEQUENCE [LARGE SCALE GENOMIC DNA]</scope>
    <source>
        <strain>CT18</strain>
    </source>
</reference>
<reference key="2">
    <citation type="journal article" date="2003" name="J. Bacteriol.">
        <title>Comparative genomics of Salmonella enterica serovar Typhi strains Ty2 and CT18.</title>
        <authorList>
            <person name="Deng W."/>
            <person name="Liou S.-R."/>
            <person name="Plunkett G. III"/>
            <person name="Mayhew G.F."/>
            <person name="Rose D.J."/>
            <person name="Burland V."/>
            <person name="Kodoyianni V."/>
            <person name="Schwartz D.C."/>
            <person name="Blattner F.R."/>
        </authorList>
    </citation>
    <scope>NUCLEOTIDE SEQUENCE [LARGE SCALE GENOMIC DNA]</scope>
    <source>
        <strain>ATCC 700931 / Ty2</strain>
    </source>
</reference>
<dbReference type="EMBL" id="AL513382">
    <property type="protein sequence ID" value="CAD01298.1"/>
    <property type="molecule type" value="Genomic_DNA"/>
</dbReference>
<dbReference type="EMBL" id="AE014613">
    <property type="protein sequence ID" value="AAO67877.1"/>
    <property type="molecule type" value="Genomic_DNA"/>
</dbReference>
<dbReference type="RefSeq" id="NP_454753.1">
    <property type="nucleotide sequence ID" value="NC_003198.1"/>
</dbReference>
<dbReference type="RefSeq" id="WP_000557441.1">
    <property type="nucleotide sequence ID" value="NZ_WSUR01000009.1"/>
</dbReference>
<dbReference type="SMR" id="P67694"/>
<dbReference type="STRING" id="220341.gene:17584200"/>
<dbReference type="KEGG" id="stt:t0145"/>
<dbReference type="KEGG" id="sty:STY0161"/>
<dbReference type="PATRIC" id="fig|220341.7.peg.161"/>
<dbReference type="eggNOG" id="COG4582">
    <property type="taxonomic scope" value="Bacteria"/>
</dbReference>
<dbReference type="HOGENOM" id="CLU_076303_0_0_6"/>
<dbReference type="OMA" id="LPAYYAW"/>
<dbReference type="OrthoDB" id="5294622at2"/>
<dbReference type="Proteomes" id="UP000000541">
    <property type="component" value="Chromosome"/>
</dbReference>
<dbReference type="Proteomes" id="UP000002670">
    <property type="component" value="Chromosome"/>
</dbReference>
<dbReference type="GO" id="GO:0032153">
    <property type="term" value="C:cell division site"/>
    <property type="evidence" value="ECO:0007669"/>
    <property type="project" value="TreeGrafter"/>
</dbReference>
<dbReference type="GO" id="GO:0005737">
    <property type="term" value="C:cytoplasm"/>
    <property type="evidence" value="ECO:0007669"/>
    <property type="project" value="UniProtKB-SubCell"/>
</dbReference>
<dbReference type="GO" id="GO:0000917">
    <property type="term" value="P:division septum assembly"/>
    <property type="evidence" value="ECO:0007669"/>
    <property type="project" value="UniProtKB-KW"/>
</dbReference>
<dbReference type="GO" id="GO:0043093">
    <property type="term" value="P:FtsZ-dependent cytokinesis"/>
    <property type="evidence" value="ECO:0007669"/>
    <property type="project" value="UniProtKB-UniRule"/>
</dbReference>
<dbReference type="FunFam" id="1.10.3900.10:FF:000001">
    <property type="entry name" value="Cell division protein ZapD"/>
    <property type="match status" value="1"/>
</dbReference>
<dbReference type="FunFam" id="2.60.440.10:FF:000001">
    <property type="entry name" value="Cell division protein ZapD"/>
    <property type="match status" value="1"/>
</dbReference>
<dbReference type="Gene3D" id="1.10.3900.10">
    <property type="entry name" value="YacF-like"/>
    <property type="match status" value="1"/>
</dbReference>
<dbReference type="Gene3D" id="2.60.440.10">
    <property type="entry name" value="YacF-like domains"/>
    <property type="match status" value="1"/>
</dbReference>
<dbReference type="HAMAP" id="MF_01092">
    <property type="entry name" value="ZapD"/>
    <property type="match status" value="1"/>
</dbReference>
<dbReference type="InterPro" id="IPR009777">
    <property type="entry name" value="ZapD"/>
</dbReference>
<dbReference type="InterPro" id="IPR027462">
    <property type="entry name" value="ZapD_C"/>
</dbReference>
<dbReference type="InterPro" id="IPR036268">
    <property type="entry name" value="ZapD_sf"/>
</dbReference>
<dbReference type="NCBIfam" id="NF003653">
    <property type="entry name" value="PRK05287.1-1"/>
    <property type="match status" value="1"/>
</dbReference>
<dbReference type="NCBIfam" id="NF003655">
    <property type="entry name" value="PRK05287.1-3"/>
    <property type="match status" value="1"/>
</dbReference>
<dbReference type="PANTHER" id="PTHR39455">
    <property type="entry name" value="CELL DIVISION PROTEIN ZAPD"/>
    <property type="match status" value="1"/>
</dbReference>
<dbReference type="PANTHER" id="PTHR39455:SF1">
    <property type="entry name" value="CELL DIVISION PROTEIN ZAPD"/>
    <property type="match status" value="1"/>
</dbReference>
<dbReference type="Pfam" id="PF07072">
    <property type="entry name" value="ZapD"/>
    <property type="match status" value="1"/>
</dbReference>
<dbReference type="SUPFAM" id="SSF160950">
    <property type="entry name" value="YacF-like"/>
    <property type="match status" value="1"/>
</dbReference>
<gene>
    <name evidence="1" type="primary">zapD</name>
    <name type="ordered locus">STY0161</name>
    <name type="ordered locus">t0145</name>
</gene>
<protein>
    <recommendedName>
        <fullName evidence="1">Cell division protein ZapD</fullName>
    </recommendedName>
    <alternativeName>
        <fullName evidence="1">Z ring-associated protein D</fullName>
    </alternativeName>
</protein>
<name>ZAPD_SALTI</name>
<feature type="chain" id="PRO_0000211679" description="Cell division protein ZapD">
    <location>
        <begin position="1"/>
        <end position="247"/>
    </location>
</feature>
<proteinExistence type="inferred from homology"/>